<organism>
    <name type="scientific">Streptococcus thermophilus (strain CNRZ 1066)</name>
    <dbReference type="NCBI Taxonomy" id="299768"/>
    <lineage>
        <taxon>Bacteria</taxon>
        <taxon>Bacillati</taxon>
        <taxon>Bacillota</taxon>
        <taxon>Bacilli</taxon>
        <taxon>Lactobacillales</taxon>
        <taxon>Streptococcaceae</taxon>
        <taxon>Streptococcus</taxon>
    </lineage>
</organism>
<name>DNAJ_STRT1</name>
<gene>
    <name evidence="1" type="primary">dnaJ</name>
    <name type="ordered locus">str0121</name>
</gene>
<feature type="chain" id="PRO_0000070908" description="Chaperone protein DnaJ">
    <location>
        <begin position="1"/>
        <end position="377"/>
    </location>
</feature>
<feature type="domain" description="J" evidence="1">
    <location>
        <begin position="5"/>
        <end position="69"/>
    </location>
</feature>
<feature type="repeat" description="CXXCXGXG motif">
    <location>
        <begin position="146"/>
        <end position="153"/>
    </location>
</feature>
<feature type="repeat" description="CXXCXGXG motif">
    <location>
        <begin position="163"/>
        <end position="170"/>
    </location>
</feature>
<feature type="repeat" description="CXXCXGXG motif">
    <location>
        <begin position="189"/>
        <end position="196"/>
    </location>
</feature>
<feature type="repeat" description="CXXCXGXG motif">
    <location>
        <begin position="203"/>
        <end position="210"/>
    </location>
</feature>
<feature type="zinc finger region" description="CR-type" evidence="1">
    <location>
        <begin position="133"/>
        <end position="215"/>
    </location>
</feature>
<feature type="binding site" evidence="1">
    <location>
        <position position="146"/>
    </location>
    <ligand>
        <name>Zn(2+)</name>
        <dbReference type="ChEBI" id="CHEBI:29105"/>
        <label>1</label>
    </ligand>
</feature>
<feature type="binding site" evidence="1">
    <location>
        <position position="149"/>
    </location>
    <ligand>
        <name>Zn(2+)</name>
        <dbReference type="ChEBI" id="CHEBI:29105"/>
        <label>1</label>
    </ligand>
</feature>
<feature type="binding site" evidence="1">
    <location>
        <position position="163"/>
    </location>
    <ligand>
        <name>Zn(2+)</name>
        <dbReference type="ChEBI" id="CHEBI:29105"/>
        <label>2</label>
    </ligand>
</feature>
<feature type="binding site" evidence="1">
    <location>
        <position position="166"/>
    </location>
    <ligand>
        <name>Zn(2+)</name>
        <dbReference type="ChEBI" id="CHEBI:29105"/>
        <label>2</label>
    </ligand>
</feature>
<feature type="binding site" evidence="1">
    <location>
        <position position="189"/>
    </location>
    <ligand>
        <name>Zn(2+)</name>
        <dbReference type="ChEBI" id="CHEBI:29105"/>
        <label>2</label>
    </ligand>
</feature>
<feature type="binding site" evidence="1">
    <location>
        <position position="192"/>
    </location>
    <ligand>
        <name>Zn(2+)</name>
        <dbReference type="ChEBI" id="CHEBI:29105"/>
        <label>2</label>
    </ligand>
</feature>
<feature type="binding site" evidence="1">
    <location>
        <position position="203"/>
    </location>
    <ligand>
        <name>Zn(2+)</name>
        <dbReference type="ChEBI" id="CHEBI:29105"/>
        <label>1</label>
    </ligand>
</feature>
<feature type="binding site" evidence="1">
    <location>
        <position position="206"/>
    </location>
    <ligand>
        <name>Zn(2+)</name>
        <dbReference type="ChEBI" id="CHEBI:29105"/>
        <label>1</label>
    </ligand>
</feature>
<proteinExistence type="inferred from homology"/>
<reference key="1">
    <citation type="journal article" date="2004" name="Nat. Biotechnol.">
        <title>Complete sequence and comparative genome analysis of the dairy bacterium Streptococcus thermophilus.</title>
        <authorList>
            <person name="Bolotin A."/>
            <person name="Quinquis B."/>
            <person name="Renault P."/>
            <person name="Sorokin A."/>
            <person name="Ehrlich S.D."/>
            <person name="Kulakauskas S."/>
            <person name="Lapidus A."/>
            <person name="Goltsman E."/>
            <person name="Mazur M."/>
            <person name="Pusch G.D."/>
            <person name="Fonstein M."/>
            <person name="Overbeek R."/>
            <person name="Kyprides N."/>
            <person name="Purnelle B."/>
            <person name="Prozzi D."/>
            <person name="Ngui K."/>
            <person name="Masuy D."/>
            <person name="Hancy F."/>
            <person name="Burteau S."/>
            <person name="Boutry M."/>
            <person name="Delcour J."/>
            <person name="Goffeau A."/>
            <person name="Hols P."/>
        </authorList>
    </citation>
    <scope>NUCLEOTIDE SEQUENCE [LARGE SCALE GENOMIC DNA]</scope>
    <source>
        <strain>CNRZ 1066</strain>
    </source>
</reference>
<accession>Q5M1T7</accession>
<evidence type="ECO:0000255" key="1">
    <source>
        <dbReference type="HAMAP-Rule" id="MF_01152"/>
    </source>
</evidence>
<comment type="function">
    <text evidence="1">Participates actively in the response to hyperosmotic and heat shock by preventing the aggregation of stress-denatured proteins and by disaggregating proteins, also in an autonomous, DnaK-independent fashion. Unfolded proteins bind initially to DnaJ; upon interaction with the DnaJ-bound protein, DnaK hydrolyzes its bound ATP, resulting in the formation of a stable complex. GrpE releases ADP from DnaK; ATP binding to DnaK triggers the release of the substrate protein, thus completing the reaction cycle. Several rounds of ATP-dependent interactions between DnaJ, DnaK and GrpE are required for fully efficient folding. Also involved, together with DnaK and GrpE, in the DNA replication of plasmids through activation of initiation proteins.</text>
</comment>
<comment type="cofactor">
    <cofactor evidence="1">
        <name>Zn(2+)</name>
        <dbReference type="ChEBI" id="CHEBI:29105"/>
    </cofactor>
    <text evidence="1">Binds 2 Zn(2+) ions per monomer.</text>
</comment>
<comment type="subunit">
    <text evidence="1">Homodimer.</text>
</comment>
<comment type="subcellular location">
    <subcellularLocation>
        <location evidence="1">Cytoplasm</location>
    </subcellularLocation>
</comment>
<comment type="domain">
    <text evidence="1">The J domain is necessary and sufficient to stimulate DnaK ATPase activity. Zinc center 1 plays an important role in the autonomous, DnaK-independent chaperone activity of DnaJ. Zinc center 2 is essential for interaction with DnaK and for DnaJ activity.</text>
</comment>
<comment type="similarity">
    <text evidence="1">Belongs to the DnaJ family.</text>
</comment>
<protein>
    <recommendedName>
        <fullName evidence="1">Chaperone protein DnaJ</fullName>
    </recommendedName>
</protein>
<keyword id="KW-0143">Chaperone</keyword>
<keyword id="KW-0963">Cytoplasm</keyword>
<keyword id="KW-0235">DNA replication</keyword>
<keyword id="KW-0479">Metal-binding</keyword>
<keyword id="KW-0677">Repeat</keyword>
<keyword id="KW-0346">Stress response</keyword>
<keyword id="KW-0862">Zinc</keyword>
<keyword id="KW-0863">Zinc-finger</keyword>
<sequence length="377" mass="40585">MNNTEYYDRLGLSKDASQDEIKRAYRKLSKKYHPDINKEPGAEEKYKEILEAYETLSDAQKRAAYDQYGPDGANGFGGQGSFGGFDGGAGFGGFEDIFSSFFGGGATRNPNAPRQGDDLQYRVNLSFEEAVFGAEKEIHYNREVTCKTCSGSGAKPGTSPVTCGRCHGHGVINVDTQTPLGMMRRQVTCDVCHGTGQEIKDPCQTCHGTGREKQSHTVSVKIPAGVETGQQIRLAGQGEAGFNGGPYGDLFVVINVNPSDKFTRDGSTIYYTLNISFVQAALGDTVEVPTVHGNVEMVIPAGTQTGKTFRLKGKGAPRLRGGSQGDQLVTVKIVTPTKLNDAQKEALLAFAKASGDEKVAPQKKGFFNKVKDVLEDL</sequence>
<dbReference type="EMBL" id="CP000024">
    <property type="protein sequence ID" value="AAV61736.1"/>
    <property type="molecule type" value="Genomic_DNA"/>
</dbReference>
<dbReference type="RefSeq" id="WP_002946937.1">
    <property type="nucleotide sequence ID" value="NC_006449.1"/>
</dbReference>
<dbReference type="SMR" id="Q5M1T7"/>
<dbReference type="GeneID" id="66898046"/>
<dbReference type="KEGG" id="stc:str0121"/>
<dbReference type="HOGENOM" id="CLU_017633_0_7_9"/>
<dbReference type="GO" id="GO:0005737">
    <property type="term" value="C:cytoplasm"/>
    <property type="evidence" value="ECO:0007669"/>
    <property type="project" value="UniProtKB-SubCell"/>
</dbReference>
<dbReference type="GO" id="GO:0005524">
    <property type="term" value="F:ATP binding"/>
    <property type="evidence" value="ECO:0007669"/>
    <property type="project" value="InterPro"/>
</dbReference>
<dbReference type="GO" id="GO:0031072">
    <property type="term" value="F:heat shock protein binding"/>
    <property type="evidence" value="ECO:0007669"/>
    <property type="project" value="InterPro"/>
</dbReference>
<dbReference type="GO" id="GO:0051082">
    <property type="term" value="F:unfolded protein binding"/>
    <property type="evidence" value="ECO:0007669"/>
    <property type="project" value="UniProtKB-UniRule"/>
</dbReference>
<dbReference type="GO" id="GO:0008270">
    <property type="term" value="F:zinc ion binding"/>
    <property type="evidence" value="ECO:0007669"/>
    <property type="project" value="UniProtKB-UniRule"/>
</dbReference>
<dbReference type="GO" id="GO:0051085">
    <property type="term" value="P:chaperone cofactor-dependent protein refolding"/>
    <property type="evidence" value="ECO:0007669"/>
    <property type="project" value="TreeGrafter"/>
</dbReference>
<dbReference type="GO" id="GO:0006260">
    <property type="term" value="P:DNA replication"/>
    <property type="evidence" value="ECO:0007669"/>
    <property type="project" value="UniProtKB-KW"/>
</dbReference>
<dbReference type="GO" id="GO:0042026">
    <property type="term" value="P:protein refolding"/>
    <property type="evidence" value="ECO:0007669"/>
    <property type="project" value="TreeGrafter"/>
</dbReference>
<dbReference type="GO" id="GO:0009408">
    <property type="term" value="P:response to heat"/>
    <property type="evidence" value="ECO:0007669"/>
    <property type="project" value="InterPro"/>
</dbReference>
<dbReference type="CDD" id="cd06257">
    <property type="entry name" value="DnaJ"/>
    <property type="match status" value="1"/>
</dbReference>
<dbReference type="CDD" id="cd10747">
    <property type="entry name" value="DnaJ_C"/>
    <property type="match status" value="1"/>
</dbReference>
<dbReference type="CDD" id="cd10719">
    <property type="entry name" value="DnaJ_zf"/>
    <property type="match status" value="1"/>
</dbReference>
<dbReference type="FunFam" id="1.10.287.110:FF:000031">
    <property type="entry name" value="Molecular chaperone DnaJ"/>
    <property type="match status" value="1"/>
</dbReference>
<dbReference type="FunFam" id="2.10.230.10:FF:000002">
    <property type="entry name" value="Molecular chaperone DnaJ"/>
    <property type="match status" value="1"/>
</dbReference>
<dbReference type="FunFam" id="2.60.260.20:FF:000004">
    <property type="entry name" value="Molecular chaperone DnaJ"/>
    <property type="match status" value="1"/>
</dbReference>
<dbReference type="Gene3D" id="1.10.287.110">
    <property type="entry name" value="DnaJ domain"/>
    <property type="match status" value="1"/>
</dbReference>
<dbReference type="Gene3D" id="2.10.230.10">
    <property type="entry name" value="Heat shock protein DnaJ, cysteine-rich domain"/>
    <property type="match status" value="1"/>
</dbReference>
<dbReference type="Gene3D" id="2.60.260.20">
    <property type="entry name" value="Urease metallochaperone UreE, N-terminal domain"/>
    <property type="match status" value="2"/>
</dbReference>
<dbReference type="HAMAP" id="MF_01152">
    <property type="entry name" value="DnaJ"/>
    <property type="match status" value="1"/>
</dbReference>
<dbReference type="InterPro" id="IPR012724">
    <property type="entry name" value="DnaJ"/>
</dbReference>
<dbReference type="InterPro" id="IPR002939">
    <property type="entry name" value="DnaJ_C"/>
</dbReference>
<dbReference type="InterPro" id="IPR001623">
    <property type="entry name" value="DnaJ_domain"/>
</dbReference>
<dbReference type="InterPro" id="IPR018253">
    <property type="entry name" value="DnaJ_domain_CS"/>
</dbReference>
<dbReference type="InterPro" id="IPR008971">
    <property type="entry name" value="HSP40/DnaJ_pept-bd"/>
</dbReference>
<dbReference type="InterPro" id="IPR001305">
    <property type="entry name" value="HSP_DnaJ_Cys-rich_dom"/>
</dbReference>
<dbReference type="InterPro" id="IPR036410">
    <property type="entry name" value="HSP_DnaJ_Cys-rich_dom_sf"/>
</dbReference>
<dbReference type="InterPro" id="IPR036869">
    <property type="entry name" value="J_dom_sf"/>
</dbReference>
<dbReference type="NCBIfam" id="TIGR02349">
    <property type="entry name" value="DnaJ_bact"/>
    <property type="match status" value="1"/>
</dbReference>
<dbReference type="NCBIfam" id="NF008035">
    <property type="entry name" value="PRK10767.1"/>
    <property type="match status" value="1"/>
</dbReference>
<dbReference type="NCBIfam" id="NF010869">
    <property type="entry name" value="PRK14276.1"/>
    <property type="match status" value="1"/>
</dbReference>
<dbReference type="PANTHER" id="PTHR43096:SF48">
    <property type="entry name" value="CHAPERONE PROTEIN DNAJ"/>
    <property type="match status" value="1"/>
</dbReference>
<dbReference type="PANTHER" id="PTHR43096">
    <property type="entry name" value="DNAJ HOMOLOG 1, MITOCHONDRIAL-RELATED"/>
    <property type="match status" value="1"/>
</dbReference>
<dbReference type="Pfam" id="PF00226">
    <property type="entry name" value="DnaJ"/>
    <property type="match status" value="1"/>
</dbReference>
<dbReference type="Pfam" id="PF01556">
    <property type="entry name" value="DnaJ_C"/>
    <property type="match status" value="1"/>
</dbReference>
<dbReference type="Pfam" id="PF00684">
    <property type="entry name" value="DnaJ_CXXCXGXG"/>
    <property type="match status" value="1"/>
</dbReference>
<dbReference type="PRINTS" id="PR00625">
    <property type="entry name" value="JDOMAIN"/>
</dbReference>
<dbReference type="SMART" id="SM00271">
    <property type="entry name" value="DnaJ"/>
    <property type="match status" value="1"/>
</dbReference>
<dbReference type="SUPFAM" id="SSF46565">
    <property type="entry name" value="Chaperone J-domain"/>
    <property type="match status" value="1"/>
</dbReference>
<dbReference type="SUPFAM" id="SSF57938">
    <property type="entry name" value="DnaJ/Hsp40 cysteine-rich domain"/>
    <property type="match status" value="1"/>
</dbReference>
<dbReference type="SUPFAM" id="SSF49493">
    <property type="entry name" value="HSP40/DnaJ peptide-binding domain"/>
    <property type="match status" value="2"/>
</dbReference>
<dbReference type="PROSITE" id="PS00636">
    <property type="entry name" value="DNAJ_1"/>
    <property type="match status" value="1"/>
</dbReference>
<dbReference type="PROSITE" id="PS50076">
    <property type="entry name" value="DNAJ_2"/>
    <property type="match status" value="1"/>
</dbReference>
<dbReference type="PROSITE" id="PS51188">
    <property type="entry name" value="ZF_CR"/>
    <property type="match status" value="1"/>
</dbReference>